<reference key="1">
    <citation type="journal article" date="2006" name="PLoS Genet.">
        <title>The complete genome sequence and comparative genome analysis of the high pathogenicity Yersinia enterocolitica strain 8081.</title>
        <authorList>
            <person name="Thomson N.R."/>
            <person name="Howard S."/>
            <person name="Wren B.W."/>
            <person name="Holden M.T.G."/>
            <person name="Crossman L."/>
            <person name="Challis G.L."/>
            <person name="Churcher C."/>
            <person name="Mungall K."/>
            <person name="Brooks K."/>
            <person name="Chillingworth T."/>
            <person name="Feltwell T."/>
            <person name="Abdellah Z."/>
            <person name="Hauser H."/>
            <person name="Jagels K."/>
            <person name="Maddison M."/>
            <person name="Moule S."/>
            <person name="Sanders M."/>
            <person name="Whitehead S."/>
            <person name="Quail M.A."/>
            <person name="Dougan G."/>
            <person name="Parkhill J."/>
            <person name="Prentice M.B."/>
        </authorList>
    </citation>
    <scope>NUCLEOTIDE SEQUENCE [LARGE SCALE GENOMIC DNA]</scope>
    <source>
        <strain>NCTC 13174 / 8081</strain>
    </source>
</reference>
<dbReference type="EC" id="2.7.2.15" evidence="2"/>
<dbReference type="EMBL" id="AM286415">
    <property type="protein sequence ID" value="CAL12781.1"/>
    <property type="molecule type" value="Genomic_DNA"/>
</dbReference>
<dbReference type="RefSeq" id="WP_011816704.1">
    <property type="nucleotide sequence ID" value="NC_008800.1"/>
</dbReference>
<dbReference type="RefSeq" id="YP_001006938.1">
    <property type="nucleotide sequence ID" value="NC_008800.1"/>
</dbReference>
<dbReference type="SMR" id="A1JTT9"/>
<dbReference type="KEGG" id="yen:YE2747"/>
<dbReference type="PATRIC" id="fig|393305.7.peg.2920"/>
<dbReference type="eggNOG" id="COG0282">
    <property type="taxonomic scope" value="Bacteria"/>
</dbReference>
<dbReference type="HOGENOM" id="CLU_020352_0_1_6"/>
<dbReference type="OrthoDB" id="9802453at2"/>
<dbReference type="UniPathway" id="UPA00621"/>
<dbReference type="Proteomes" id="UP000000642">
    <property type="component" value="Chromosome"/>
</dbReference>
<dbReference type="GO" id="GO:0005737">
    <property type="term" value="C:cytoplasm"/>
    <property type="evidence" value="ECO:0007669"/>
    <property type="project" value="UniProtKB-SubCell"/>
</dbReference>
<dbReference type="GO" id="GO:0008776">
    <property type="term" value="F:acetate kinase activity"/>
    <property type="evidence" value="ECO:0007669"/>
    <property type="project" value="TreeGrafter"/>
</dbReference>
<dbReference type="GO" id="GO:0005524">
    <property type="term" value="F:ATP binding"/>
    <property type="evidence" value="ECO:0007669"/>
    <property type="project" value="UniProtKB-KW"/>
</dbReference>
<dbReference type="GO" id="GO:0008980">
    <property type="term" value="F:propionate kinase activity"/>
    <property type="evidence" value="ECO:0007669"/>
    <property type="project" value="UniProtKB-UniRule"/>
</dbReference>
<dbReference type="GO" id="GO:0006083">
    <property type="term" value="P:acetate metabolic process"/>
    <property type="evidence" value="ECO:0007669"/>
    <property type="project" value="TreeGrafter"/>
</dbReference>
<dbReference type="GO" id="GO:0051144">
    <property type="term" value="P:propanediol catabolic process"/>
    <property type="evidence" value="ECO:0007669"/>
    <property type="project" value="UniProtKB-UniPathway"/>
</dbReference>
<dbReference type="GO" id="GO:0019543">
    <property type="term" value="P:propionate catabolic process"/>
    <property type="evidence" value="ECO:0007669"/>
    <property type="project" value="InterPro"/>
</dbReference>
<dbReference type="CDD" id="cd24010">
    <property type="entry name" value="ASKHA_NBD_AcK_PK"/>
    <property type="match status" value="1"/>
</dbReference>
<dbReference type="Gene3D" id="3.30.420.40">
    <property type="match status" value="2"/>
</dbReference>
<dbReference type="HAMAP" id="MF_00020">
    <property type="entry name" value="Acetate_kinase"/>
    <property type="match status" value="1"/>
</dbReference>
<dbReference type="HAMAP" id="MF_01882">
    <property type="entry name" value="Propion_kin_subfam2"/>
    <property type="match status" value="1"/>
</dbReference>
<dbReference type="InterPro" id="IPR004372">
    <property type="entry name" value="Ac/propionate_kinase"/>
</dbReference>
<dbReference type="InterPro" id="IPR000890">
    <property type="entry name" value="Aliphatic_acid_kin_short-chain"/>
</dbReference>
<dbReference type="InterPro" id="IPR023865">
    <property type="entry name" value="Aliphatic_acid_kinase_CS"/>
</dbReference>
<dbReference type="InterPro" id="IPR043129">
    <property type="entry name" value="ATPase_NBD"/>
</dbReference>
<dbReference type="InterPro" id="IPR024896">
    <property type="entry name" value="Propionate_kinase_PduW"/>
</dbReference>
<dbReference type="NCBIfam" id="TIGR00016">
    <property type="entry name" value="ackA"/>
    <property type="match status" value="1"/>
</dbReference>
<dbReference type="NCBIfam" id="NF009063">
    <property type="entry name" value="PRK12397.1"/>
    <property type="match status" value="1"/>
</dbReference>
<dbReference type="PANTHER" id="PTHR21060">
    <property type="entry name" value="ACETATE KINASE"/>
    <property type="match status" value="1"/>
</dbReference>
<dbReference type="PANTHER" id="PTHR21060:SF15">
    <property type="entry name" value="ACETATE KINASE-RELATED"/>
    <property type="match status" value="1"/>
</dbReference>
<dbReference type="Pfam" id="PF00871">
    <property type="entry name" value="Acetate_kinase"/>
    <property type="match status" value="1"/>
</dbReference>
<dbReference type="PIRSF" id="PIRSF000722">
    <property type="entry name" value="Acetate_prop_kin"/>
    <property type="match status" value="1"/>
</dbReference>
<dbReference type="PRINTS" id="PR00471">
    <property type="entry name" value="ACETATEKNASE"/>
</dbReference>
<dbReference type="SUPFAM" id="SSF53067">
    <property type="entry name" value="Actin-like ATPase domain"/>
    <property type="match status" value="2"/>
</dbReference>
<dbReference type="PROSITE" id="PS01075">
    <property type="entry name" value="ACETATE_KINASE_1"/>
    <property type="match status" value="1"/>
</dbReference>
<dbReference type="PROSITE" id="PS01076">
    <property type="entry name" value="ACETATE_KINASE_2"/>
    <property type="match status" value="1"/>
</dbReference>
<organism>
    <name type="scientific">Yersinia enterocolitica serotype O:8 / biotype 1B (strain NCTC 13174 / 8081)</name>
    <dbReference type="NCBI Taxonomy" id="393305"/>
    <lineage>
        <taxon>Bacteria</taxon>
        <taxon>Pseudomonadati</taxon>
        <taxon>Pseudomonadota</taxon>
        <taxon>Gammaproteobacteria</taxon>
        <taxon>Enterobacterales</taxon>
        <taxon>Yersiniaceae</taxon>
        <taxon>Yersinia</taxon>
    </lineage>
</organism>
<sequence length="412" mass="45001">MSGKIMAINAGSSSLKFQLFSMLNEQTGQHHEQVLCQGLIERIGMDDAIFNLRVGDVQWRETLPIADCRQGAEHLLRALIEHNVIDSLDEIIGVGHRVAHGGETFADSVLITPQVLDKIEQLGTLAPLHNPVNALGIRVFQLALPHASAVAVFDTAFHQTLSQTSFLYPLPWRYYEELGIRRYGFHGTSHKYVSAVCAERMGQPLAALRIVSCHLGNGSSICAIGHGKSVNTSMGFTPQAGVMMGTRSGDIDPSILPFIQQTEGKSAVEINHLINNQSGLLGISGISHDYRDVEQAADNGNRRAALALELFAERIRAVIGSYIVQLGGIDALIFTGGIGENSRSARQQICRELTFLGIELDQEKNIRNQFFIQQDTAPVQIAIVNTNEELMIARDVLRVALNLPVQPALATQ</sequence>
<comment type="function">
    <text evidence="1">Works with phosphate acetyltransferase (pta) to capture exogenous propionate and regenerate propionyl-CoA during degradation of 1,2-propanediol (1,2-PD).</text>
</comment>
<comment type="catalytic activity">
    <reaction evidence="2">
        <text>propanoate + ATP = propanoyl phosphate + ADP</text>
        <dbReference type="Rhea" id="RHEA:23148"/>
        <dbReference type="ChEBI" id="CHEBI:17272"/>
        <dbReference type="ChEBI" id="CHEBI:30616"/>
        <dbReference type="ChEBI" id="CHEBI:58933"/>
        <dbReference type="ChEBI" id="CHEBI:456216"/>
        <dbReference type="EC" id="2.7.2.15"/>
    </reaction>
</comment>
<comment type="pathway">
    <text evidence="1 3">Polyol metabolism; 1,2-propanediol degradation.</text>
</comment>
<comment type="subcellular location">
    <subcellularLocation>
        <location evidence="2">Cytoplasm</location>
    </subcellularLocation>
</comment>
<comment type="similarity">
    <text evidence="2">Belongs to the acetokinase family. PduW subfamily.</text>
</comment>
<proteinExistence type="inferred from homology"/>
<feature type="chain" id="PRO_0000398203" description="Propionate kinase">
    <location>
        <begin position="1"/>
        <end position="412"/>
    </location>
</feature>
<name>PDUW_YERE8</name>
<keyword id="KW-0067">ATP-binding</keyword>
<keyword id="KW-0963">Cytoplasm</keyword>
<keyword id="KW-0418">Kinase</keyword>
<keyword id="KW-0547">Nucleotide-binding</keyword>
<keyword id="KW-0808">Transferase</keyword>
<protein>
    <recommendedName>
        <fullName evidence="2">Propionate kinase</fullName>
        <ecNumber evidence="2">2.7.2.15</ecNumber>
    </recommendedName>
</protein>
<evidence type="ECO:0000250" key="1">
    <source>
        <dbReference type="UniProtKB" id="P74879"/>
    </source>
</evidence>
<evidence type="ECO:0000255" key="2">
    <source>
        <dbReference type="HAMAP-Rule" id="MF_01882"/>
    </source>
</evidence>
<evidence type="ECO:0000305" key="3"/>
<accession>A1JTT9</accession>
<gene>
    <name evidence="2" type="primary">pduW</name>
    <name type="ordered locus">YE2747</name>
</gene>